<keyword id="KW-1185">Reference proteome</keyword>
<proteinExistence type="predicted"/>
<name>Y1639_METJA</name>
<gene>
    <name type="ordered locus">MJ1639</name>
</gene>
<accession>Q59033</accession>
<organism>
    <name type="scientific">Methanocaldococcus jannaschii (strain ATCC 43067 / DSM 2661 / JAL-1 / JCM 10045 / NBRC 100440)</name>
    <name type="common">Methanococcus jannaschii</name>
    <dbReference type="NCBI Taxonomy" id="243232"/>
    <lineage>
        <taxon>Archaea</taxon>
        <taxon>Methanobacteriati</taxon>
        <taxon>Methanobacteriota</taxon>
        <taxon>Methanomada group</taxon>
        <taxon>Methanococci</taxon>
        <taxon>Methanococcales</taxon>
        <taxon>Methanocaldococcaceae</taxon>
        <taxon>Methanocaldococcus</taxon>
    </lineage>
</organism>
<dbReference type="EMBL" id="L77117">
    <property type="protein sequence ID" value="AAB99665.1"/>
    <property type="molecule type" value="Genomic_DNA"/>
</dbReference>
<dbReference type="PIR" id="E64504">
    <property type="entry name" value="E64504"/>
</dbReference>
<dbReference type="PaxDb" id="243232-MJ_1639"/>
<dbReference type="EnsemblBacteria" id="AAB99665">
    <property type="protein sequence ID" value="AAB99665"/>
    <property type="gene ID" value="MJ_1639"/>
</dbReference>
<dbReference type="KEGG" id="mja:MJ_1639"/>
<dbReference type="HOGENOM" id="CLU_1700289_0_0_2"/>
<dbReference type="InParanoid" id="Q59033"/>
<dbReference type="Proteomes" id="UP000000805">
    <property type="component" value="Chromosome"/>
</dbReference>
<reference key="1">
    <citation type="journal article" date="1996" name="Science">
        <title>Complete genome sequence of the methanogenic archaeon, Methanococcus jannaschii.</title>
        <authorList>
            <person name="Bult C.J."/>
            <person name="White O."/>
            <person name="Olsen G.J."/>
            <person name="Zhou L."/>
            <person name="Fleischmann R.D."/>
            <person name="Sutton G.G."/>
            <person name="Blake J.A."/>
            <person name="FitzGerald L.M."/>
            <person name="Clayton R.A."/>
            <person name="Gocayne J.D."/>
            <person name="Kerlavage A.R."/>
            <person name="Dougherty B.A."/>
            <person name="Tomb J.-F."/>
            <person name="Adams M.D."/>
            <person name="Reich C.I."/>
            <person name="Overbeek R."/>
            <person name="Kirkness E.F."/>
            <person name="Weinstock K.G."/>
            <person name="Merrick J.M."/>
            <person name="Glodek A."/>
            <person name="Scott J.L."/>
            <person name="Geoghagen N.S.M."/>
            <person name="Weidman J.F."/>
            <person name="Fuhrmann J.L."/>
            <person name="Nguyen D."/>
            <person name="Utterback T.R."/>
            <person name="Kelley J.M."/>
            <person name="Peterson J.D."/>
            <person name="Sadow P.W."/>
            <person name="Hanna M.C."/>
            <person name="Cotton M.D."/>
            <person name="Roberts K.M."/>
            <person name="Hurst M.A."/>
            <person name="Kaine B.P."/>
            <person name="Borodovsky M."/>
            <person name="Klenk H.-P."/>
            <person name="Fraser C.M."/>
            <person name="Smith H.O."/>
            <person name="Woese C.R."/>
            <person name="Venter J.C."/>
        </authorList>
    </citation>
    <scope>NUCLEOTIDE SEQUENCE [LARGE SCALE GENOMIC DNA]</scope>
    <source>
        <strain>ATCC 43067 / DSM 2661 / JAL-1 / JCM 10045 / NBRC 100440</strain>
    </source>
</reference>
<protein>
    <recommendedName>
        <fullName>Uncharacterized protein MJ1639</fullName>
    </recommendedName>
</protein>
<sequence length="154" mass="17584">MYFVIKGDSIMYFVLRLGGDLSLYIPAKYRPFFEPLDKNSPYNIKVNLENSSGDIVVDNVLDDKKIDERNSEITKLGGLINELRRKKENGDNINIIEIRLKLKDDSIITHNLNTPNIEDYDDNKLVINSGTLVINGKTTIDLNNIEEITLKLDI</sequence>
<feature type="chain" id="PRO_0000107453" description="Uncharacterized protein MJ1639">
    <location>
        <begin position="1"/>
        <end position="154"/>
    </location>
</feature>